<feature type="chain" id="PRO_0000112441" description="N-acetyl-gamma-glutamyl-phosphate reductase">
    <location>
        <begin position="1"/>
        <end position="342"/>
    </location>
</feature>
<feature type="active site" evidence="1">
    <location>
        <position position="149"/>
    </location>
</feature>
<keyword id="KW-0028">Amino-acid biosynthesis</keyword>
<keyword id="KW-0055">Arginine biosynthesis</keyword>
<keyword id="KW-0963">Cytoplasm</keyword>
<keyword id="KW-0521">NADP</keyword>
<keyword id="KW-0560">Oxidoreductase</keyword>
<keyword id="KW-1185">Reference proteome</keyword>
<comment type="function">
    <text evidence="1">Catalyzes the NADPH-dependent reduction of N-acetyl-5-glutamyl phosphate to yield N-acetyl-L-glutamate 5-semialdehyde.</text>
</comment>
<comment type="catalytic activity">
    <reaction evidence="1">
        <text>N-acetyl-L-glutamate 5-semialdehyde + phosphate + NADP(+) = N-acetyl-L-glutamyl 5-phosphate + NADPH + H(+)</text>
        <dbReference type="Rhea" id="RHEA:21588"/>
        <dbReference type="ChEBI" id="CHEBI:15378"/>
        <dbReference type="ChEBI" id="CHEBI:29123"/>
        <dbReference type="ChEBI" id="CHEBI:43474"/>
        <dbReference type="ChEBI" id="CHEBI:57783"/>
        <dbReference type="ChEBI" id="CHEBI:57936"/>
        <dbReference type="ChEBI" id="CHEBI:58349"/>
        <dbReference type="EC" id="1.2.1.38"/>
    </reaction>
</comment>
<comment type="pathway">
    <text evidence="1">Amino-acid biosynthesis; L-arginine biosynthesis; N(2)-acetyl-L-ornithine from L-glutamate: step 3/4.</text>
</comment>
<comment type="subcellular location">
    <subcellularLocation>
        <location evidence="1">Cytoplasm</location>
    </subcellularLocation>
</comment>
<comment type="similarity">
    <text evidence="1">Belongs to the NAGSA dehydrogenase family. Type 1 subfamily.</text>
</comment>
<comment type="sequence caution" evidence="2">
    <conflict type="erroneous initiation">
        <sequence resource="EMBL-CDS" id="AAF26220"/>
    </conflict>
    <text>Extended N-terminus.</text>
</comment>
<proteinExistence type="inferred from homology"/>
<protein>
    <recommendedName>
        <fullName evidence="1">N-acetyl-gamma-glutamyl-phosphate reductase</fullName>
        <shortName evidence="1">AGPR</shortName>
        <ecNumber evidence="1">1.2.1.38</ecNumber>
    </recommendedName>
    <alternativeName>
        <fullName evidence="1">N-acetyl-glutamate semialdehyde dehydrogenase</fullName>
        <shortName evidence="1">NAGSA dehydrogenase</shortName>
    </alternativeName>
</protein>
<gene>
    <name evidence="1" type="primary">argC</name>
    <name type="ordered locus">RCAP_rcc00553</name>
</gene>
<organism>
    <name type="scientific">Rhodobacter capsulatus (strain ATCC BAA-309 / NBRC 16581 / SB1003)</name>
    <dbReference type="NCBI Taxonomy" id="272942"/>
    <lineage>
        <taxon>Bacteria</taxon>
        <taxon>Pseudomonadati</taxon>
        <taxon>Pseudomonadota</taxon>
        <taxon>Alphaproteobacteria</taxon>
        <taxon>Rhodobacterales</taxon>
        <taxon>Rhodobacter group</taxon>
        <taxon>Rhodobacter</taxon>
    </lineage>
</organism>
<reference key="1">
    <citation type="journal article" date="2000" name="Mol. Microbiol.">
        <title>Novel Rhodobacter capsulatus genes required for the biogenesis of various c-type cytochromes.</title>
        <authorList>
            <person name="Deshmukh M."/>
            <person name="Brasseur G."/>
            <person name="Daldal F."/>
        </authorList>
    </citation>
    <scope>NUCLEOTIDE SEQUENCE [GENOMIC DNA]</scope>
    <source>
        <strain>MT1131</strain>
    </source>
</reference>
<reference key="2">
    <citation type="journal article" date="2010" name="J. Bacteriol.">
        <title>Complete genome sequence of the photosynthetic purple nonsulfur bacterium Rhodobacter capsulatus SB 1003.</title>
        <authorList>
            <person name="Strnad H."/>
            <person name="Lapidus A."/>
            <person name="Paces J."/>
            <person name="Ulbrich P."/>
            <person name="Vlcek C."/>
            <person name="Paces V."/>
            <person name="Haselkorn R."/>
        </authorList>
    </citation>
    <scope>NUCLEOTIDE SEQUENCE [LARGE SCALE GENOMIC DNA]</scope>
    <source>
        <strain>ATCC BAA-309 / NBRC 16581 / SB1003</strain>
    </source>
</reference>
<dbReference type="EC" id="1.2.1.38" evidence="1"/>
<dbReference type="EMBL" id="AF156104">
    <property type="protein sequence ID" value="AAF26220.1"/>
    <property type="status" value="ALT_INIT"/>
    <property type="molecule type" value="Genomic_DNA"/>
</dbReference>
<dbReference type="EMBL" id="CP001312">
    <property type="protein sequence ID" value="ADE84318.1"/>
    <property type="molecule type" value="Genomic_DNA"/>
</dbReference>
<dbReference type="RefSeq" id="WP_013066297.1">
    <property type="nucleotide sequence ID" value="NC_014034.1"/>
</dbReference>
<dbReference type="SMR" id="Q9LA02"/>
<dbReference type="STRING" id="272942.RCAP_rcc00553"/>
<dbReference type="GeneID" id="31489504"/>
<dbReference type="KEGG" id="rcp:RCAP_rcc00553"/>
<dbReference type="eggNOG" id="COG0002">
    <property type="taxonomic scope" value="Bacteria"/>
</dbReference>
<dbReference type="HOGENOM" id="CLU_006384_0_1_5"/>
<dbReference type="OrthoDB" id="9801289at2"/>
<dbReference type="UniPathway" id="UPA00068">
    <property type="reaction ID" value="UER00108"/>
</dbReference>
<dbReference type="Proteomes" id="UP000002361">
    <property type="component" value="Chromosome"/>
</dbReference>
<dbReference type="GO" id="GO:0005737">
    <property type="term" value="C:cytoplasm"/>
    <property type="evidence" value="ECO:0007669"/>
    <property type="project" value="UniProtKB-SubCell"/>
</dbReference>
<dbReference type="GO" id="GO:0003942">
    <property type="term" value="F:N-acetyl-gamma-glutamyl-phosphate reductase activity"/>
    <property type="evidence" value="ECO:0007669"/>
    <property type="project" value="UniProtKB-UniRule"/>
</dbReference>
<dbReference type="GO" id="GO:0051287">
    <property type="term" value="F:NAD binding"/>
    <property type="evidence" value="ECO:0007669"/>
    <property type="project" value="InterPro"/>
</dbReference>
<dbReference type="GO" id="GO:0070401">
    <property type="term" value="F:NADP+ binding"/>
    <property type="evidence" value="ECO:0007669"/>
    <property type="project" value="InterPro"/>
</dbReference>
<dbReference type="GO" id="GO:0006526">
    <property type="term" value="P:L-arginine biosynthetic process"/>
    <property type="evidence" value="ECO:0007669"/>
    <property type="project" value="UniProtKB-UniRule"/>
</dbReference>
<dbReference type="CDD" id="cd23934">
    <property type="entry name" value="AGPR_1_C"/>
    <property type="match status" value="1"/>
</dbReference>
<dbReference type="CDD" id="cd17895">
    <property type="entry name" value="AGPR_1_N"/>
    <property type="match status" value="1"/>
</dbReference>
<dbReference type="Gene3D" id="3.30.360.10">
    <property type="entry name" value="Dihydrodipicolinate Reductase, domain 2"/>
    <property type="match status" value="1"/>
</dbReference>
<dbReference type="Gene3D" id="3.40.50.720">
    <property type="entry name" value="NAD(P)-binding Rossmann-like Domain"/>
    <property type="match status" value="1"/>
</dbReference>
<dbReference type="HAMAP" id="MF_00150">
    <property type="entry name" value="ArgC_type1"/>
    <property type="match status" value="1"/>
</dbReference>
<dbReference type="InterPro" id="IPR000706">
    <property type="entry name" value="AGPR_type-1"/>
</dbReference>
<dbReference type="InterPro" id="IPR036291">
    <property type="entry name" value="NAD(P)-bd_dom_sf"/>
</dbReference>
<dbReference type="InterPro" id="IPR050085">
    <property type="entry name" value="NAGSA_dehydrogenase"/>
</dbReference>
<dbReference type="InterPro" id="IPR000534">
    <property type="entry name" value="Semialdehyde_DH_NAD-bd"/>
</dbReference>
<dbReference type="NCBIfam" id="TIGR01850">
    <property type="entry name" value="argC"/>
    <property type="match status" value="1"/>
</dbReference>
<dbReference type="PANTHER" id="PTHR32338:SF10">
    <property type="entry name" value="N-ACETYL-GAMMA-GLUTAMYL-PHOSPHATE REDUCTASE, CHLOROPLASTIC-RELATED"/>
    <property type="match status" value="1"/>
</dbReference>
<dbReference type="PANTHER" id="PTHR32338">
    <property type="entry name" value="N-ACETYL-GAMMA-GLUTAMYL-PHOSPHATE REDUCTASE, CHLOROPLASTIC-RELATED-RELATED"/>
    <property type="match status" value="1"/>
</dbReference>
<dbReference type="Pfam" id="PF01118">
    <property type="entry name" value="Semialdhyde_dh"/>
    <property type="match status" value="1"/>
</dbReference>
<dbReference type="Pfam" id="PF22698">
    <property type="entry name" value="Semialdhyde_dhC_1"/>
    <property type="match status" value="1"/>
</dbReference>
<dbReference type="SMART" id="SM00859">
    <property type="entry name" value="Semialdhyde_dh"/>
    <property type="match status" value="1"/>
</dbReference>
<dbReference type="SUPFAM" id="SSF55347">
    <property type="entry name" value="Glyceraldehyde-3-phosphate dehydrogenase-like, C-terminal domain"/>
    <property type="match status" value="1"/>
</dbReference>
<dbReference type="SUPFAM" id="SSF51735">
    <property type="entry name" value="NAD(P)-binding Rossmann-fold domains"/>
    <property type="match status" value="1"/>
</dbReference>
<accession>Q9LA02</accession>
<accession>D5ANG4</accession>
<name>ARGC_RHOCB</name>
<evidence type="ECO:0000255" key="1">
    <source>
        <dbReference type="HAMAP-Rule" id="MF_00150"/>
    </source>
</evidence>
<evidence type="ECO:0000305" key="2"/>
<sequence>MTQKIAILGASGYTGAELARIIATHPEMEITALSGDRKAGMRMGEVFPHLRHIGLPDLVKIEEIDFSGIDLAFCALPHATSQAVIAELPRDLKVVDLSADFRLRDAAEYEKWYGKPHAAMDLQAEAVYGLTEFYREELKTARLCAGTGCNAAAGQYAIRPLIEAGVIDLDEIVIDLKAGVSGAGRSLKENLLHAELAGGTMPYSAGGKHRHLGEFDQEFSKVAGRPVRVQFTPHLMPFNRGILATVYVRGTPEDIHAALASRYENEVFLEVLPFGQLASTRSVAGSNFVHLGVIGDRLPGRAVVTVALDNLTKGSSGQAIQNANLMLGLPETLGLMLAPVFP</sequence>